<dbReference type="EMBL" id="BA000031">
    <property type="protein sequence ID" value="BAC59593.1"/>
    <property type="molecule type" value="Genomic_DNA"/>
</dbReference>
<dbReference type="RefSeq" id="NP_797709.1">
    <property type="nucleotide sequence ID" value="NC_004603.1"/>
</dbReference>
<dbReference type="RefSeq" id="WP_005480619.1">
    <property type="nucleotide sequence ID" value="NC_004603.1"/>
</dbReference>
<dbReference type="SMR" id="Q87Q20"/>
<dbReference type="GeneID" id="1188835"/>
<dbReference type="KEGG" id="vpa:VP1330"/>
<dbReference type="PATRIC" id="fig|223926.6.peg.1272"/>
<dbReference type="eggNOG" id="COG3938">
    <property type="taxonomic scope" value="Bacteria"/>
</dbReference>
<dbReference type="HOGENOM" id="CLU_036729_0_0_6"/>
<dbReference type="Proteomes" id="UP000002493">
    <property type="component" value="Chromosome 1"/>
</dbReference>
<dbReference type="GO" id="GO:0047580">
    <property type="term" value="F:4-hydroxyproline epimerase activity"/>
    <property type="evidence" value="ECO:0007669"/>
    <property type="project" value="TreeGrafter"/>
</dbReference>
<dbReference type="FunFam" id="3.10.310.10:FF:000005">
    <property type="entry name" value="Proline racemase"/>
    <property type="match status" value="1"/>
</dbReference>
<dbReference type="Gene3D" id="3.10.310.10">
    <property type="entry name" value="Diaminopimelate Epimerase, Chain A, domain 1"/>
    <property type="match status" value="2"/>
</dbReference>
<dbReference type="InterPro" id="IPR008794">
    <property type="entry name" value="Pro_racemase_fam"/>
</dbReference>
<dbReference type="NCBIfam" id="NF010578">
    <property type="entry name" value="PRK13971.1"/>
    <property type="match status" value="1"/>
</dbReference>
<dbReference type="PANTHER" id="PTHR33442:SF5">
    <property type="entry name" value="BIFUNCTIONAL TRANS-3-HYDROXY-L-PROLINE DEHYDRATASE_2-EPIMERASE"/>
    <property type="match status" value="1"/>
</dbReference>
<dbReference type="PANTHER" id="PTHR33442">
    <property type="entry name" value="TRANS-3-HYDROXY-L-PROLINE DEHYDRATASE"/>
    <property type="match status" value="1"/>
</dbReference>
<dbReference type="Pfam" id="PF05544">
    <property type="entry name" value="Pro_racemase"/>
    <property type="match status" value="1"/>
</dbReference>
<dbReference type="PIRSF" id="PIRSF029792">
    <property type="entry name" value="Pro_racemase"/>
    <property type="match status" value="1"/>
</dbReference>
<dbReference type="SFLD" id="SFLDS00028">
    <property type="entry name" value="Proline_Racemase"/>
    <property type="match status" value="1"/>
</dbReference>
<dbReference type="SUPFAM" id="SSF54506">
    <property type="entry name" value="Diaminopimelate epimerase-like"/>
    <property type="match status" value="1"/>
</dbReference>
<evidence type="ECO:0000305" key="1"/>
<reference key="1">
    <citation type="journal article" date="2003" name="Lancet">
        <title>Genome sequence of Vibrio parahaemolyticus: a pathogenic mechanism distinct from that of V. cholerae.</title>
        <authorList>
            <person name="Makino K."/>
            <person name="Oshima K."/>
            <person name="Kurokawa K."/>
            <person name="Yokoyama K."/>
            <person name="Uda T."/>
            <person name="Tagomori K."/>
            <person name="Iijima Y."/>
            <person name="Najima M."/>
            <person name="Nakano M."/>
            <person name="Yamashita A."/>
            <person name="Kubota Y."/>
            <person name="Kimura S."/>
            <person name="Yasunaga T."/>
            <person name="Honda T."/>
            <person name="Shinagawa H."/>
            <person name="Hattori M."/>
            <person name="Iida T."/>
        </authorList>
    </citation>
    <scope>NUCLEOTIDE SEQUENCE [LARGE SCALE GENOMIC DNA]</scope>
    <source>
        <strain>RIMD 2210633</strain>
    </source>
</reference>
<reference key="2">
    <citation type="journal article" date="2007" name="PLoS ONE">
        <title>Molecular and structural discrimination of proline racemase and hydroxyproline-2-epimerase from nosocomial and bacterial pathogens.</title>
        <authorList>
            <person name="Goytia M."/>
            <person name="Chamond N."/>
            <person name="Cosson A."/>
            <person name="Coatnoan N."/>
            <person name="Hermant D."/>
            <person name="Berneman A."/>
            <person name="Minoprio P."/>
        </authorList>
    </citation>
    <scope>LACK OF ENZYMATIC ACTIVITY AS PROLINE RACEMASE AND HYDROXYPROLINE-2-EPIMERASE</scope>
    <source>
        <strain>CNRVC 010089</strain>
    </source>
</reference>
<feature type="chain" id="PRO_0000354048" description="Uncharacterized protein VP1330">
    <location>
        <begin position="1"/>
        <end position="333"/>
    </location>
</feature>
<gene>
    <name type="ordered locus">VP1330</name>
</gene>
<organism>
    <name type="scientific">Vibrio parahaemolyticus serotype O3:K6 (strain RIMD 2210633)</name>
    <dbReference type="NCBI Taxonomy" id="223926"/>
    <lineage>
        <taxon>Bacteria</taxon>
        <taxon>Pseudomonadati</taxon>
        <taxon>Pseudomonadota</taxon>
        <taxon>Gammaproteobacteria</taxon>
        <taxon>Vibrionales</taxon>
        <taxon>Vibrionaceae</taxon>
        <taxon>Vibrio</taxon>
    </lineage>
</organism>
<protein>
    <recommendedName>
        <fullName>Uncharacterized protein VP1330</fullName>
    </recommendedName>
</protein>
<name>Y1330_VIBPA</name>
<accession>Q87Q20</accession>
<sequence length="333" mass="36377">MRQGTFFCIDAHTCGNPVRLVAGGVPPLEGNTMSEKRQYFLEHYDWIRQALMFEPRGHSMMSGSVVLPPCSDNADASILFIETSGCLPMCGHGTIGTVTTAIENRLITPKEEGRLILDVPAGQIEVHYQTKGDKVTSVKIFNVPAYLAHQDVTVEIEGLGEITVDVAYGGNYYVIVDPQENYAGLEHYSPDEILMLSPKVRTAVSKAVECIHPNDPTVCGVSHVLWTGKPTQEGATARNAVFYGDKALDRSPCGTGTSARMAQWHAKGKLKSGEDFVHESIIGSLFNGRIEGITEVNGQTAILPSIEGWAQVYGHNTIWVDDEDPYAYGFEVK</sequence>
<comment type="similarity">
    <text evidence="1">Belongs to the proline racemase family.</text>
</comment>
<comment type="caution">
    <text evidence="1">This protein does not possess neither proline racemase nor hydroxyproline-2-epimerase activities.</text>
</comment>
<proteinExistence type="evidence at protein level"/>